<gene>
    <name evidence="1" type="primary">rpsP</name>
    <name type="ordered locus">Nther_1369</name>
</gene>
<evidence type="ECO:0000255" key="1">
    <source>
        <dbReference type="HAMAP-Rule" id="MF_00385"/>
    </source>
</evidence>
<evidence type="ECO:0000305" key="2"/>
<proteinExistence type="inferred from homology"/>
<dbReference type="EMBL" id="CP001034">
    <property type="protein sequence ID" value="ACB84952.1"/>
    <property type="molecule type" value="Genomic_DNA"/>
</dbReference>
<dbReference type="RefSeq" id="WP_012447827.1">
    <property type="nucleotide sequence ID" value="NC_010718.1"/>
</dbReference>
<dbReference type="SMR" id="B2A2N7"/>
<dbReference type="FunCoup" id="B2A2N7">
    <property type="interactions" value="429"/>
</dbReference>
<dbReference type="STRING" id="457570.Nther_1369"/>
<dbReference type="KEGG" id="nth:Nther_1369"/>
<dbReference type="eggNOG" id="COG0228">
    <property type="taxonomic scope" value="Bacteria"/>
</dbReference>
<dbReference type="HOGENOM" id="CLU_100590_5_0_9"/>
<dbReference type="InParanoid" id="B2A2N7"/>
<dbReference type="OrthoDB" id="9807878at2"/>
<dbReference type="Proteomes" id="UP000001683">
    <property type="component" value="Chromosome"/>
</dbReference>
<dbReference type="GO" id="GO:0005737">
    <property type="term" value="C:cytoplasm"/>
    <property type="evidence" value="ECO:0007669"/>
    <property type="project" value="UniProtKB-ARBA"/>
</dbReference>
<dbReference type="GO" id="GO:0015935">
    <property type="term" value="C:small ribosomal subunit"/>
    <property type="evidence" value="ECO:0007669"/>
    <property type="project" value="TreeGrafter"/>
</dbReference>
<dbReference type="GO" id="GO:0003735">
    <property type="term" value="F:structural constituent of ribosome"/>
    <property type="evidence" value="ECO:0007669"/>
    <property type="project" value="InterPro"/>
</dbReference>
<dbReference type="GO" id="GO:0006412">
    <property type="term" value="P:translation"/>
    <property type="evidence" value="ECO:0007669"/>
    <property type="project" value="UniProtKB-UniRule"/>
</dbReference>
<dbReference type="Gene3D" id="3.30.1320.10">
    <property type="match status" value="1"/>
</dbReference>
<dbReference type="HAMAP" id="MF_00385">
    <property type="entry name" value="Ribosomal_bS16"/>
    <property type="match status" value="1"/>
</dbReference>
<dbReference type="InterPro" id="IPR000307">
    <property type="entry name" value="Ribosomal_bS16"/>
</dbReference>
<dbReference type="InterPro" id="IPR020592">
    <property type="entry name" value="Ribosomal_bS16_CS"/>
</dbReference>
<dbReference type="InterPro" id="IPR023803">
    <property type="entry name" value="Ribosomal_bS16_dom_sf"/>
</dbReference>
<dbReference type="NCBIfam" id="TIGR00002">
    <property type="entry name" value="S16"/>
    <property type="match status" value="1"/>
</dbReference>
<dbReference type="PANTHER" id="PTHR12919">
    <property type="entry name" value="30S RIBOSOMAL PROTEIN S16"/>
    <property type="match status" value="1"/>
</dbReference>
<dbReference type="PANTHER" id="PTHR12919:SF20">
    <property type="entry name" value="SMALL RIBOSOMAL SUBUNIT PROTEIN BS16M"/>
    <property type="match status" value="1"/>
</dbReference>
<dbReference type="Pfam" id="PF00886">
    <property type="entry name" value="Ribosomal_S16"/>
    <property type="match status" value="1"/>
</dbReference>
<dbReference type="SUPFAM" id="SSF54565">
    <property type="entry name" value="Ribosomal protein S16"/>
    <property type="match status" value="1"/>
</dbReference>
<dbReference type="PROSITE" id="PS00732">
    <property type="entry name" value="RIBOSOMAL_S16"/>
    <property type="match status" value="1"/>
</dbReference>
<protein>
    <recommendedName>
        <fullName evidence="1">Small ribosomal subunit protein bS16</fullName>
    </recommendedName>
    <alternativeName>
        <fullName evidence="2">30S ribosomal protein S16</fullName>
    </alternativeName>
</protein>
<feature type="chain" id="PRO_1000196444" description="Small ribosomal subunit protein bS16">
    <location>
        <begin position="1"/>
        <end position="82"/>
    </location>
</feature>
<organism>
    <name type="scientific">Natranaerobius thermophilus (strain ATCC BAA-1301 / DSM 18059 / JW/NM-WN-LF)</name>
    <dbReference type="NCBI Taxonomy" id="457570"/>
    <lineage>
        <taxon>Bacteria</taxon>
        <taxon>Bacillati</taxon>
        <taxon>Bacillota</taxon>
        <taxon>Clostridia</taxon>
        <taxon>Natranaerobiales</taxon>
        <taxon>Natranaerobiaceae</taxon>
        <taxon>Natranaerobius</taxon>
    </lineage>
</organism>
<name>RS16_NATTJ</name>
<accession>B2A2N7</accession>
<sequence length="82" mass="9361">MAVRMRLKRMGAKKQPSYRIVVADVRAPRDGRFIEELGHYNPTTEPVTLEINEEKAKKWLQEGAKPSQKVRSLLTQAGVVEK</sequence>
<comment type="similarity">
    <text evidence="1">Belongs to the bacterial ribosomal protein bS16 family.</text>
</comment>
<keyword id="KW-1185">Reference proteome</keyword>
<keyword id="KW-0687">Ribonucleoprotein</keyword>
<keyword id="KW-0689">Ribosomal protein</keyword>
<reference key="1">
    <citation type="submission" date="2008-04" db="EMBL/GenBank/DDBJ databases">
        <title>Complete sequence of chromosome of Natranaerobius thermophilus JW/NM-WN-LF.</title>
        <authorList>
            <consortium name="US DOE Joint Genome Institute"/>
            <person name="Copeland A."/>
            <person name="Lucas S."/>
            <person name="Lapidus A."/>
            <person name="Glavina del Rio T."/>
            <person name="Dalin E."/>
            <person name="Tice H."/>
            <person name="Bruce D."/>
            <person name="Goodwin L."/>
            <person name="Pitluck S."/>
            <person name="Chertkov O."/>
            <person name="Brettin T."/>
            <person name="Detter J.C."/>
            <person name="Han C."/>
            <person name="Kuske C.R."/>
            <person name="Schmutz J."/>
            <person name="Larimer F."/>
            <person name="Land M."/>
            <person name="Hauser L."/>
            <person name="Kyrpides N."/>
            <person name="Lykidis A."/>
            <person name="Mesbah N.M."/>
            <person name="Wiegel J."/>
        </authorList>
    </citation>
    <scope>NUCLEOTIDE SEQUENCE [LARGE SCALE GENOMIC DNA]</scope>
    <source>
        <strain>ATCC BAA-1301 / DSM 18059 / JW/NM-WN-LF</strain>
    </source>
</reference>